<feature type="chain" id="PRO_1000054152" description="Cyclic pyranopterin monophosphate synthase">
    <location>
        <begin position="1"/>
        <end position="164"/>
    </location>
</feature>
<feature type="active site" evidence="1">
    <location>
        <position position="131"/>
    </location>
</feature>
<feature type="binding site" evidence="1">
    <location>
        <begin position="75"/>
        <end position="77"/>
    </location>
    <ligand>
        <name>substrate</name>
    </ligand>
</feature>
<feature type="binding site" evidence="1">
    <location>
        <begin position="116"/>
        <end position="117"/>
    </location>
    <ligand>
        <name>substrate</name>
    </ligand>
</feature>
<accession>Q2YYS2</accession>
<comment type="function">
    <text evidence="1">Catalyzes the conversion of (8S)-3',8-cyclo-7,8-dihydroguanosine 5'-triphosphate to cyclic pyranopterin monophosphate (cPMP).</text>
</comment>
<comment type="catalytic activity">
    <reaction evidence="1">
        <text>(8S)-3',8-cyclo-7,8-dihydroguanosine 5'-triphosphate = cyclic pyranopterin phosphate + diphosphate</text>
        <dbReference type="Rhea" id="RHEA:49580"/>
        <dbReference type="ChEBI" id="CHEBI:33019"/>
        <dbReference type="ChEBI" id="CHEBI:59648"/>
        <dbReference type="ChEBI" id="CHEBI:131766"/>
        <dbReference type="EC" id="4.6.1.17"/>
    </reaction>
</comment>
<comment type="pathway">
    <text evidence="1">Cofactor biosynthesis; molybdopterin biosynthesis.</text>
</comment>
<comment type="subunit">
    <text evidence="1">Homohexamer; trimer of dimers.</text>
</comment>
<comment type="similarity">
    <text evidence="1">Belongs to the MoaC family.</text>
</comment>
<protein>
    <recommendedName>
        <fullName evidence="1">Cyclic pyranopterin monophosphate synthase</fullName>
        <ecNumber evidence="1">4.6.1.17</ecNumber>
    </recommendedName>
    <alternativeName>
        <fullName evidence="1">Molybdenum cofactor biosynthesis protein C</fullName>
    </alternativeName>
</protein>
<sequence>MTEFTHINQQGHAKMVDVSDKQITKRTAVAHSSITVNETIYKQISNNTNTKGNVLNTAQIAGIMAAKNTSTIIPMCHPLPLTGIDVHFSWDETNAPLYTLNIQTTVSTTGKTGVEMEALTAASATALTIYDMTKAVDKGMIIGETYLESKSGGKSGDFQRQSGQ</sequence>
<dbReference type="EC" id="4.6.1.17" evidence="1"/>
<dbReference type="EMBL" id="AJ938182">
    <property type="protein sequence ID" value="CAI81835.1"/>
    <property type="molecule type" value="Genomic_DNA"/>
</dbReference>
<dbReference type="RefSeq" id="WP_000134534.1">
    <property type="nucleotide sequence ID" value="NC_007622.1"/>
</dbReference>
<dbReference type="SMR" id="Q2YYS2"/>
<dbReference type="KEGG" id="sab:SAB2146"/>
<dbReference type="HOGENOM" id="CLU_074693_1_1_9"/>
<dbReference type="UniPathway" id="UPA00344"/>
<dbReference type="GO" id="GO:0061799">
    <property type="term" value="F:cyclic pyranopterin monophosphate synthase activity"/>
    <property type="evidence" value="ECO:0007669"/>
    <property type="project" value="UniProtKB-UniRule"/>
</dbReference>
<dbReference type="GO" id="GO:0006777">
    <property type="term" value="P:Mo-molybdopterin cofactor biosynthetic process"/>
    <property type="evidence" value="ECO:0007669"/>
    <property type="project" value="UniProtKB-UniRule"/>
</dbReference>
<dbReference type="CDD" id="cd01420">
    <property type="entry name" value="MoaC_PE"/>
    <property type="match status" value="1"/>
</dbReference>
<dbReference type="Gene3D" id="3.30.70.640">
    <property type="entry name" value="Molybdopterin cofactor biosynthesis C (MoaC) domain"/>
    <property type="match status" value="1"/>
</dbReference>
<dbReference type="HAMAP" id="MF_01224_B">
    <property type="entry name" value="MoaC_B"/>
    <property type="match status" value="1"/>
</dbReference>
<dbReference type="InterPro" id="IPR023045">
    <property type="entry name" value="MoaC"/>
</dbReference>
<dbReference type="InterPro" id="IPR047594">
    <property type="entry name" value="MoaC_bact/euk"/>
</dbReference>
<dbReference type="InterPro" id="IPR036522">
    <property type="entry name" value="MoaC_sf"/>
</dbReference>
<dbReference type="InterPro" id="IPR050105">
    <property type="entry name" value="MoCo_biosynth_MoaA/MoaC"/>
</dbReference>
<dbReference type="InterPro" id="IPR002820">
    <property type="entry name" value="Mopterin_CF_biosynth-C_dom"/>
</dbReference>
<dbReference type="NCBIfam" id="TIGR00581">
    <property type="entry name" value="moaC"/>
    <property type="match status" value="1"/>
</dbReference>
<dbReference type="NCBIfam" id="NF006870">
    <property type="entry name" value="PRK09364.1"/>
    <property type="match status" value="1"/>
</dbReference>
<dbReference type="PANTHER" id="PTHR22960">
    <property type="entry name" value="MOLYBDOPTERIN COFACTOR SYNTHESIS PROTEIN A"/>
    <property type="match status" value="1"/>
</dbReference>
<dbReference type="Pfam" id="PF01967">
    <property type="entry name" value="MoaC"/>
    <property type="match status" value="1"/>
</dbReference>
<dbReference type="SUPFAM" id="SSF55040">
    <property type="entry name" value="Molybdenum cofactor biosynthesis protein C, MoaC"/>
    <property type="match status" value="1"/>
</dbReference>
<gene>
    <name evidence="1" type="primary">moaC</name>
    <name type="ordered locus">SAB2146</name>
</gene>
<keyword id="KW-0456">Lyase</keyword>
<keyword id="KW-0501">Molybdenum cofactor biosynthesis</keyword>
<name>MOAC_STAAB</name>
<reference key="1">
    <citation type="journal article" date="2007" name="PLoS ONE">
        <title>Molecular correlates of host specialization in Staphylococcus aureus.</title>
        <authorList>
            <person name="Herron-Olson L."/>
            <person name="Fitzgerald J.R."/>
            <person name="Musser J.M."/>
            <person name="Kapur V."/>
        </authorList>
    </citation>
    <scope>NUCLEOTIDE SEQUENCE [LARGE SCALE GENOMIC DNA]</scope>
    <source>
        <strain>bovine RF122 / ET3-1</strain>
    </source>
</reference>
<organism>
    <name type="scientific">Staphylococcus aureus (strain bovine RF122 / ET3-1)</name>
    <dbReference type="NCBI Taxonomy" id="273036"/>
    <lineage>
        <taxon>Bacteria</taxon>
        <taxon>Bacillati</taxon>
        <taxon>Bacillota</taxon>
        <taxon>Bacilli</taxon>
        <taxon>Bacillales</taxon>
        <taxon>Staphylococcaceae</taxon>
        <taxon>Staphylococcus</taxon>
    </lineage>
</organism>
<proteinExistence type="inferred from homology"/>
<evidence type="ECO:0000255" key="1">
    <source>
        <dbReference type="HAMAP-Rule" id="MF_01224"/>
    </source>
</evidence>